<comment type="function">
    <text evidence="3">Carboxypeptidase that cleaves terminal D-alanine from peptidoglycan in the mycobacterial cell wall. May cleave L-Lys-D-Ala and/or D-Ala-D-Ala peptide bonds. Exerts important effects on mycobacterial cell morphology and cell division.</text>
</comment>
<comment type="miscellaneous">
    <text evidence="3">Overexpression in M.smegmatis leads to elongated cells and promotes the formation of increased numbers of Z-rings.</text>
</comment>
<comment type="similarity">
    <text evidence="4">Belongs to the peptidase S13 family.</text>
</comment>
<reference key="1">
    <citation type="journal article" date="1998" name="Nature">
        <title>Deciphering the biology of Mycobacterium tuberculosis from the complete genome sequence.</title>
        <authorList>
            <person name="Cole S.T."/>
            <person name="Brosch R."/>
            <person name="Parkhill J."/>
            <person name="Garnier T."/>
            <person name="Churcher C.M."/>
            <person name="Harris D.E."/>
            <person name="Gordon S.V."/>
            <person name="Eiglmeier K."/>
            <person name="Gas S."/>
            <person name="Barry C.E. III"/>
            <person name="Tekaia F."/>
            <person name="Badcock K."/>
            <person name="Basham D."/>
            <person name="Brown D."/>
            <person name="Chillingworth T."/>
            <person name="Connor R."/>
            <person name="Davies R.M."/>
            <person name="Devlin K."/>
            <person name="Feltwell T."/>
            <person name="Gentles S."/>
            <person name="Hamlin N."/>
            <person name="Holroyd S."/>
            <person name="Hornsby T."/>
            <person name="Jagels K."/>
            <person name="Krogh A."/>
            <person name="McLean J."/>
            <person name="Moule S."/>
            <person name="Murphy L.D."/>
            <person name="Oliver S."/>
            <person name="Osborne J."/>
            <person name="Quail M.A."/>
            <person name="Rajandream M.A."/>
            <person name="Rogers J."/>
            <person name="Rutter S."/>
            <person name="Seeger K."/>
            <person name="Skelton S."/>
            <person name="Squares S."/>
            <person name="Squares R."/>
            <person name="Sulston J.E."/>
            <person name="Taylor K."/>
            <person name="Whitehead S."/>
            <person name="Barrell B.G."/>
        </authorList>
    </citation>
    <scope>NUCLEOTIDE SEQUENCE [LARGE SCALE GENOMIC DNA]</scope>
    <source>
        <strain>ATCC 25618 / H37Rv</strain>
    </source>
</reference>
<reference evidence="6" key="2">
    <citation type="journal article" date="2011" name="Mol. Cell. Proteomics">
        <title>Proteogenomic analysis of Mycobacterium tuberculosis by high resolution mass spectrometry.</title>
        <authorList>
            <person name="Kelkar D.S."/>
            <person name="Kumar D."/>
            <person name="Kumar P."/>
            <person name="Balakrishnan L."/>
            <person name="Muthusamy B."/>
            <person name="Yadav A.K."/>
            <person name="Shrivastava P."/>
            <person name="Marimuthu A."/>
            <person name="Anand S."/>
            <person name="Sundaram H."/>
            <person name="Kingsbury R."/>
            <person name="Harsha H.C."/>
            <person name="Nair B."/>
            <person name="Prasad T.S."/>
            <person name="Chauhan D.S."/>
            <person name="Katoch K."/>
            <person name="Katoch V.M."/>
            <person name="Kumar P."/>
            <person name="Chaerkady R."/>
            <person name="Ramachandran S."/>
            <person name="Dash D."/>
            <person name="Pandey A."/>
        </authorList>
    </citation>
    <scope>IDENTIFICATION BY MASS SPECTROMETRY [LARGE SCALE ANALYSIS]</scope>
</reference>
<reference key="3">
    <citation type="journal article" date="2019" name="Enzyme Microb. Technol.">
        <title>Identification of a novel carboxypeptidase encoded by Rv3627c that plays a potential role in mycobacteria morphology and cell division.</title>
        <authorList>
            <person name="Zhang W."/>
            <person name="Li S."/>
            <person name="Ma L."/>
            <person name="Ding W."/>
            <person name="Xu Y."/>
        </authorList>
    </citation>
    <scope>FUNCTION</scope>
    <scope>OVEREXPRESSION</scope>
    <source>
        <strain>H37Rv</strain>
    </source>
</reference>
<feature type="signal peptide" evidence="2">
    <location>
        <begin position="1"/>
        <end position="28"/>
    </location>
</feature>
<feature type="chain" id="PRO_5004156985" description="Carboxypeptidase Rv3627c">
    <location>
        <begin position="29"/>
        <end position="461"/>
    </location>
</feature>
<feature type="active site" description="Acyl-ester intermediate" evidence="1">
    <location>
        <position position="114"/>
    </location>
</feature>
<feature type="active site" description="Proton acceptor" evidence="1">
    <location>
        <position position="117"/>
    </location>
</feature>
<feature type="active site" evidence="1">
    <location>
        <position position="295"/>
    </location>
</feature>
<proteinExistence type="evidence at protein level"/>
<keyword id="KW-0121">Carboxypeptidase</keyword>
<keyword id="KW-0961">Cell wall biogenesis/degradation</keyword>
<keyword id="KW-0378">Hydrolase</keyword>
<keyword id="KW-0645">Protease</keyword>
<keyword id="KW-1185">Reference proteome</keyword>
<keyword id="KW-0732">Signal</keyword>
<organism>
    <name type="scientific">Mycobacterium tuberculosis (strain ATCC 25618 / H37Rv)</name>
    <dbReference type="NCBI Taxonomy" id="83332"/>
    <lineage>
        <taxon>Bacteria</taxon>
        <taxon>Bacillati</taxon>
        <taxon>Actinomycetota</taxon>
        <taxon>Actinomycetes</taxon>
        <taxon>Mycobacteriales</taxon>
        <taxon>Mycobacteriaceae</taxon>
        <taxon>Mycobacterium</taxon>
        <taxon>Mycobacterium tuberculosis complex</taxon>
    </lineage>
</organism>
<accession>O06380</accession>
<accession>F2GEZ8</accession>
<accession>I6YGT2</accession>
<gene>
    <name evidence="5" type="ordered locus">Rv3627c</name>
</gene>
<protein>
    <recommendedName>
        <fullName evidence="4">Carboxypeptidase Rv3627c</fullName>
        <ecNumber evidence="3">3.4.16.-</ecNumber>
    </recommendedName>
</protein>
<sequence>MGPTRWRKSTHVVVGAAVLAFVAVVVAAAALVTTGGHRAGVRAPAPPPRPPTVKAGVVPVADTAATPSAAGVTAALAVVAADPDLGKLAGRITDALTGQELWQRLDDVPLVPASTNKILTAAAALLTLDRQARISTRVVAGGQNPQGPVVLVGAGDPTLSAAPPGQDTWYHGAARIGDLVEQIRRSGVTPTAVQVDASAFSGPTMAPGWDPADIDNGDIAPIEAAMIDAGRIQPTTVNSRRSRTPALDAGRELAKALGLDPAAVTIASAPAGARQLAVVQSAPLIQRLSQMMNASDNVMAECIGREVAVAINRPQSFSGAVDAVTSRLNTAHIDTAGAALVDSSGLSLDNRLTARTLDATMQAAAGPDQPALRPLLDLLPIAGGSGTLGERFLDAATDQGPAGWLRAKTGSLTAINSLVGVLTDRSGRVLTFAFISNEAGPNGRNAMDALATKLWFCGCTT</sequence>
<dbReference type="EC" id="3.4.16.-" evidence="3"/>
<dbReference type="EMBL" id="AL123456">
    <property type="protein sequence ID" value="CCP46450.1"/>
    <property type="molecule type" value="Genomic_DNA"/>
</dbReference>
<dbReference type="RefSeq" id="NP_218144.1">
    <property type="nucleotide sequence ID" value="NC_000962.3"/>
</dbReference>
<dbReference type="SMR" id="O06380"/>
<dbReference type="FunCoup" id="O06380">
    <property type="interactions" value="4"/>
</dbReference>
<dbReference type="STRING" id="83332.Rv3627c"/>
<dbReference type="MEROPS" id="S13.004"/>
<dbReference type="PaxDb" id="83332-Rv3627c"/>
<dbReference type="DNASU" id="885728"/>
<dbReference type="GeneID" id="885728"/>
<dbReference type="KEGG" id="mtu:Rv3627c"/>
<dbReference type="KEGG" id="mtv:RVBD_3627c"/>
<dbReference type="PATRIC" id="fig|83332.111.peg.4033"/>
<dbReference type="TubercuList" id="Rv3627c"/>
<dbReference type="eggNOG" id="COG2027">
    <property type="taxonomic scope" value="Bacteria"/>
</dbReference>
<dbReference type="InParanoid" id="O06380"/>
<dbReference type="OrthoDB" id="56883at2"/>
<dbReference type="PhylomeDB" id="O06380"/>
<dbReference type="Proteomes" id="UP000001584">
    <property type="component" value="Chromosome"/>
</dbReference>
<dbReference type="GO" id="GO:0005576">
    <property type="term" value="C:extracellular region"/>
    <property type="evidence" value="ECO:0007005"/>
    <property type="project" value="MTBBASE"/>
</dbReference>
<dbReference type="GO" id="GO:0004185">
    <property type="term" value="F:serine-type carboxypeptidase activity"/>
    <property type="evidence" value="ECO:0000318"/>
    <property type="project" value="GO_Central"/>
</dbReference>
<dbReference type="GO" id="GO:0071555">
    <property type="term" value="P:cell wall organization"/>
    <property type="evidence" value="ECO:0007669"/>
    <property type="project" value="UniProtKB-KW"/>
</dbReference>
<dbReference type="GO" id="GO:0000270">
    <property type="term" value="P:peptidoglycan metabolic process"/>
    <property type="evidence" value="ECO:0000318"/>
    <property type="project" value="GO_Central"/>
</dbReference>
<dbReference type="GO" id="GO:0006508">
    <property type="term" value="P:proteolysis"/>
    <property type="evidence" value="ECO:0007669"/>
    <property type="project" value="UniProtKB-KW"/>
</dbReference>
<dbReference type="FunFam" id="3.40.710.10:FF:000114">
    <property type="entry name" value="D-alanyl-D-alanine carboxypeptidase"/>
    <property type="match status" value="1"/>
</dbReference>
<dbReference type="FunFam" id="3.40.710.10:FF:000130">
    <property type="entry name" value="D-alanyl-D-alanine carboxypeptidase"/>
    <property type="match status" value="1"/>
</dbReference>
<dbReference type="Gene3D" id="3.40.710.10">
    <property type="entry name" value="DD-peptidase/beta-lactamase superfamily"/>
    <property type="match status" value="2"/>
</dbReference>
<dbReference type="InterPro" id="IPR012338">
    <property type="entry name" value="Beta-lactam/transpept-like"/>
</dbReference>
<dbReference type="InterPro" id="IPR000667">
    <property type="entry name" value="Peptidase_S13"/>
</dbReference>
<dbReference type="InterPro" id="IPR056340">
    <property type="entry name" value="Rv3627c-like_N"/>
</dbReference>
<dbReference type="NCBIfam" id="TIGR00666">
    <property type="entry name" value="PBP4"/>
    <property type="match status" value="2"/>
</dbReference>
<dbReference type="PANTHER" id="PTHR30023">
    <property type="entry name" value="D-ALANYL-D-ALANINE CARBOXYPEPTIDASE"/>
    <property type="match status" value="1"/>
</dbReference>
<dbReference type="PANTHER" id="PTHR30023:SF0">
    <property type="entry name" value="PENICILLIN-SENSITIVE CARBOXYPEPTIDASE A"/>
    <property type="match status" value="1"/>
</dbReference>
<dbReference type="Pfam" id="PF02113">
    <property type="entry name" value="Peptidase_S13"/>
    <property type="match status" value="1"/>
</dbReference>
<dbReference type="Pfam" id="PF23714">
    <property type="entry name" value="Rv3627c_N"/>
    <property type="match status" value="1"/>
</dbReference>
<dbReference type="PRINTS" id="PR00922">
    <property type="entry name" value="DADACBPTASE3"/>
</dbReference>
<dbReference type="SUPFAM" id="SSF56601">
    <property type="entry name" value="beta-lactamase/transpeptidase-like"/>
    <property type="match status" value="1"/>
</dbReference>
<name>CBXPD_MYCTU</name>
<evidence type="ECO:0000250" key="1">
    <source>
        <dbReference type="UniProtKB" id="P39844"/>
    </source>
</evidence>
<evidence type="ECO:0000255" key="2"/>
<evidence type="ECO:0000269" key="3">
    <source>
    </source>
</evidence>
<evidence type="ECO:0000305" key="4"/>
<evidence type="ECO:0000312" key="5">
    <source>
        <dbReference type="EMBL" id="CCP46450.1"/>
    </source>
</evidence>
<evidence type="ECO:0007744" key="6">
    <source>
    </source>
</evidence>